<dbReference type="EMBL" id="J01347">
    <property type="protein sequence ID" value="AAB59342.1"/>
    <property type="molecule type" value="Genomic_DNA"/>
</dbReference>
<dbReference type="EMBL" id="M57897">
    <property type="protein sequence ID" value="AAA34955.1"/>
    <property type="molecule type" value="Genomic_DNA"/>
</dbReference>
<dbReference type="EMBL" id="M57898">
    <property type="protein sequence ID" value="AAA34956.1"/>
    <property type="molecule type" value="Genomic_DNA"/>
</dbReference>
<dbReference type="PIR" id="JQ1027">
    <property type="entry name" value="JQ1027"/>
</dbReference>
<dbReference type="PIR" id="S22793">
    <property type="entry name" value="S22793"/>
</dbReference>
<dbReference type="PIR" id="S22872">
    <property type="entry name" value="S22872"/>
</dbReference>
<dbReference type="SMR" id="Q06891"/>
<dbReference type="DIP" id="DIP-518N"/>
<dbReference type="FunCoup" id="Q06891">
    <property type="interactions" value="109"/>
</dbReference>
<dbReference type="IntAct" id="Q06891">
    <property type="interactions" value="4"/>
</dbReference>
<dbReference type="PeptideAtlas" id="Q06891"/>
<dbReference type="AGR" id="SGD:S000029674"/>
<dbReference type="SGD" id="S000029674">
    <property type="gene designation" value="RAF1"/>
</dbReference>
<dbReference type="InParanoid" id="Q06891"/>
<dbReference type="PRO" id="PR:Q06891"/>
<dbReference type="Proteomes" id="UP000002311">
    <property type="component" value="Plasmid 2-micron"/>
</dbReference>
<dbReference type="RNAct" id="Q06891">
    <property type="molecule type" value="protein"/>
</dbReference>
<dbReference type="GO" id="GO:0005634">
    <property type="term" value="C:nucleus"/>
    <property type="evidence" value="ECO:0000305"/>
    <property type="project" value="SGD"/>
</dbReference>
<dbReference type="GO" id="GO:0006276">
    <property type="term" value="P:plasmid maintenance"/>
    <property type="evidence" value="ECO:0000315"/>
    <property type="project" value="SGD"/>
</dbReference>
<dbReference type="GO" id="GO:0030541">
    <property type="term" value="P:plasmid partitioning"/>
    <property type="evidence" value="ECO:0000314"/>
    <property type="project" value="SGD"/>
</dbReference>
<comment type="function">
    <text evidence="1 2">Plays a role in 2-micron plasmid partitioning. Antagonizes transcriptional repression of recombinase FLP by REP1-REP2 (PubMed:2832156). Regulates both stability and copy number of the plasmid by blocking the formation of the REP1-REP2 repressor complex (PubMed:28472368).</text>
</comment>
<comment type="induction">
    <text evidence="1">Repressed by the negative regulatory complex REP1-REP2.</text>
</comment>
<accession>Q06891</accession>
<accession>Q06966</accession>
<accession>Q06977</accession>
<reference key="1">
    <citation type="journal article" date="1980" name="Nature">
        <title>Nucleotide sequence of the yeast plasmid.</title>
        <authorList>
            <person name="Hartley J.L."/>
            <person name="Donelson J.E."/>
        </authorList>
    </citation>
    <scope>NUCLEOTIDE SEQUENCE [GENOMIC DNA]</scope>
    <source>
        <strain>A364A D5</strain>
    </source>
</reference>
<reference key="2">
    <citation type="journal article" date="1991" name="Gene">
        <title>Sequence diversity of yeast 2 microns RAF gene and its co-evolution with STB and REP1.</title>
        <authorList>
            <person name="Xiao W."/>
            <person name="Pelcher L.E."/>
            <person name="Rank G.H."/>
        </authorList>
    </citation>
    <scope>NUCLEOTIDE SEQUENCE [GENOMIC DNA]</scope>
    <source>
        <strain>ATCC 4108</strain>
        <strain>ATCC 7754</strain>
    </source>
</reference>
<reference key="3">
    <citation type="journal article" date="1987" name="EMBO J.">
        <title>Antagonistic controls regulate copy number of the yeast 2 micron plasmid.</title>
        <authorList>
            <person name="Murray J.A.H."/>
            <person name="Scarpa M."/>
            <person name="Rossi N."/>
            <person name="Cesareni G."/>
        </authorList>
    </citation>
    <scope>FUNCTION</scope>
    <scope>INDUCTION</scope>
</reference>
<reference key="4">
    <citation type="journal article" date="2017" name="Nucleic Acids Res.">
        <title>The 2-mum plasmid encoded protein Raf1 regulates both stability and copy number of the plasmid by blocking the formation of the Rep1-Rep2 repressor complex.</title>
        <authorList>
            <person name="Rizvi S.M.A."/>
            <person name="Prajapati H.K."/>
            <person name="Nag P."/>
            <person name="Ghosh S.K."/>
        </authorList>
    </citation>
    <scope>FUNCTION</scope>
</reference>
<reference key="5">
    <citation type="journal article" date="2018" name="J. Proteome Res.">
        <title>Enrichment-based proteogenomics identifies microproteins, missing proteins, and novel smORFs in Saccharomyces cerevisiae.</title>
        <authorList>
            <person name="He C."/>
            <person name="Jia C."/>
            <person name="Zhang Y."/>
            <person name="Xu P."/>
        </authorList>
    </citation>
    <scope>IDENTIFICATION BY MASS SPECTROMETRY</scope>
</reference>
<gene>
    <name evidence="3" type="primary">RAF1</name>
    <name evidence="5" type="ordered locus">R0030W</name>
</gene>
<feature type="chain" id="PRO_0000283651" description="Trans-acting factor D">
    <location>
        <begin position="1"/>
        <end position="181"/>
    </location>
</feature>
<feature type="sequence variant" description="In strain: ATCC 7754.">
    <original>V</original>
    <variation>A</variation>
    <location>
        <position position="33"/>
    </location>
</feature>
<feature type="sequence variant" description="In strain: ATCC 7754.">
    <original>K</original>
    <variation>R</variation>
    <location>
        <position position="36"/>
    </location>
</feature>
<feature type="sequence variant" description="In strain: ATCC 7754.">
    <original>RIPRTI</original>
    <variation>KVPQTV</variation>
    <location>
        <begin position="46"/>
        <end position="51"/>
    </location>
</feature>
<feature type="sequence variant" description="In strain: ATCC 7754.">
    <original>RS</original>
    <variation>KF</variation>
    <location>
        <begin position="67"/>
        <end position="68"/>
    </location>
</feature>
<feature type="sequence variant" description="In strain: ATCC 7754.">
    <original>R</original>
    <variation>K</variation>
    <location>
        <position position="104"/>
    </location>
</feature>
<feature type="sequence variant" description="In strain: ATCC 7754.">
    <original>L</original>
    <variation>S</variation>
    <location>
        <position position="116"/>
    </location>
</feature>
<feature type="sequence variant" description="In strain: ATCC 7754.">
    <original>D</original>
    <variation>N</variation>
    <location>
        <position position="125"/>
    </location>
</feature>
<feature type="sequence variant" description="In strain: ATCC 7754.">
    <original>I</original>
    <variation>T</variation>
    <location>
        <position position="136"/>
    </location>
</feature>
<feature type="sequence variant" description="In strain: ATCC 4108.">
    <original>R</original>
    <variation>H</variation>
    <location>
        <position position="137"/>
    </location>
</feature>
<feature type="sequence variant" description="In strain: ATCC 7754.">
    <original>N</original>
    <variation>D</variation>
    <location>
        <position position="144"/>
    </location>
</feature>
<feature type="sequence variant" description="In strain: ATCC 7754.">
    <original>IYDRTC</original>
    <variation>NYGRTG</variation>
    <location>
        <begin position="152"/>
        <end position="157"/>
    </location>
</feature>
<feature type="sequence variant" description="In strain: ATCC 7754.">
    <original>N</original>
    <variation>D</variation>
    <location>
        <position position="162"/>
    </location>
</feature>
<feature type="sequence variant" description="In strain: ATCC 7754.">
    <original>F</original>
    <variation>L</variation>
    <location>
        <position position="171"/>
    </location>
</feature>
<feature type="sequence variant" description="In strain: ATCC 7754.">
    <original>P</original>
    <variation>S</variation>
    <location>
        <position position="180"/>
    </location>
</feature>
<protein>
    <recommendedName>
        <fullName evidence="4">Trans-acting factor D</fullName>
    </recommendedName>
    <alternativeName>
        <fullName evidence="3">REP-antagonizing factor</fullName>
    </alternativeName>
    <alternativeName>
        <fullName evidence="3">Recombinase-activating factor</fullName>
        <shortName>RAF</shortName>
    </alternativeName>
</protein>
<sequence>MPYKTAIDCIEELATQCFLSKLTDDDVSTFRRVCSKENDIIKLALRIPRTIDYTSILRLLYDTLPLRSLSFNEALPLFCYSIDPAQQRQCDLRFYLRDVVKLARPRKRLEMQKALLQWLPSLLSDVTLQLLNDIRIRFEEIQPNIRQTVLQIYDRTCYPSLNFEHPNLGVFPETDSIFEPV</sequence>
<name>RAF_YEAST</name>
<geneLocation type="plasmid">
    <name>2-micron</name>
</geneLocation>
<evidence type="ECO:0000269" key="1">
    <source>
    </source>
</evidence>
<evidence type="ECO:0000269" key="2">
    <source>
    </source>
</evidence>
<evidence type="ECO:0000303" key="3">
    <source>
    </source>
</evidence>
<evidence type="ECO:0000305" key="4"/>
<evidence type="ECO:0000312" key="5">
    <source>
        <dbReference type="SGD" id="S000029674"/>
    </source>
</evidence>
<proteinExistence type="evidence at protein level"/>
<keyword id="KW-0614">Plasmid</keyword>
<keyword id="KW-0616">Plasmid partition</keyword>
<keyword id="KW-1185">Reference proteome</keyword>
<organism>
    <name type="scientific">Saccharomyces cerevisiae (strain ATCC 204508 / S288c)</name>
    <name type="common">Baker's yeast</name>
    <dbReference type="NCBI Taxonomy" id="559292"/>
    <lineage>
        <taxon>Eukaryota</taxon>
        <taxon>Fungi</taxon>
        <taxon>Dikarya</taxon>
        <taxon>Ascomycota</taxon>
        <taxon>Saccharomycotina</taxon>
        <taxon>Saccharomycetes</taxon>
        <taxon>Saccharomycetales</taxon>
        <taxon>Saccharomycetaceae</taxon>
        <taxon>Saccharomyces</taxon>
    </lineage>
</organism>